<reference key="1">
    <citation type="journal article" date="2006" name="Science">
        <title>A small microbial genome: the end of a long symbiotic relationship?</title>
        <authorList>
            <person name="Perez-Brocal V."/>
            <person name="Gil R."/>
            <person name="Ramos S."/>
            <person name="Lamelas A."/>
            <person name="Postigo M."/>
            <person name="Michelena J.M."/>
            <person name="Silva F.J."/>
            <person name="Moya A."/>
            <person name="Latorre A."/>
        </authorList>
    </citation>
    <scope>NUCLEOTIDE SEQUENCE [LARGE SCALE GENOMIC DNA]</scope>
    <source>
        <strain>Cc</strain>
    </source>
</reference>
<name>RL29_BUCCC</name>
<proteinExistence type="inferred from homology"/>
<accession>Q057B2</accession>
<evidence type="ECO:0000255" key="1">
    <source>
        <dbReference type="HAMAP-Rule" id="MF_00374"/>
    </source>
</evidence>
<evidence type="ECO:0000305" key="2"/>
<protein>
    <recommendedName>
        <fullName evidence="1">Large ribosomal subunit protein uL29</fullName>
    </recommendedName>
    <alternativeName>
        <fullName evidence="2">50S ribosomal protein L29</fullName>
    </alternativeName>
</protein>
<feature type="chain" id="PRO_1000007431" description="Large ribosomal subunit protein uL29">
    <location>
        <begin position="1"/>
        <end position="65"/>
    </location>
</feature>
<organism>
    <name type="scientific">Buchnera aphidicola subsp. Cinara cedri (strain Cc)</name>
    <dbReference type="NCBI Taxonomy" id="372461"/>
    <lineage>
        <taxon>Bacteria</taxon>
        <taxon>Pseudomonadati</taxon>
        <taxon>Pseudomonadota</taxon>
        <taxon>Gammaproteobacteria</taxon>
        <taxon>Enterobacterales</taxon>
        <taxon>Erwiniaceae</taxon>
        <taxon>Buchnera</taxon>
    </lineage>
</organism>
<sequence>MNIIEKNNIDKNHLKKNLLDLLKEQFNIRLQLSSGKLKKTHLVKKNKKDIARIKTVLNKRINHTL</sequence>
<keyword id="KW-1185">Reference proteome</keyword>
<keyword id="KW-0687">Ribonucleoprotein</keyword>
<keyword id="KW-0689">Ribosomal protein</keyword>
<gene>
    <name evidence="1" type="primary">rpmC</name>
    <name type="ordered locus">BCc_333</name>
</gene>
<dbReference type="EMBL" id="CP000263">
    <property type="protein sequence ID" value="ABJ90787.1"/>
    <property type="molecule type" value="Genomic_DNA"/>
</dbReference>
<dbReference type="RefSeq" id="WP_011672706.1">
    <property type="nucleotide sequence ID" value="NC_008513.1"/>
</dbReference>
<dbReference type="SMR" id="Q057B2"/>
<dbReference type="STRING" id="372461.BCc_333"/>
<dbReference type="KEGG" id="bcc:BCc_333"/>
<dbReference type="eggNOG" id="COG0255">
    <property type="taxonomic scope" value="Bacteria"/>
</dbReference>
<dbReference type="HOGENOM" id="CLU_158491_1_2_6"/>
<dbReference type="Proteomes" id="UP000000669">
    <property type="component" value="Chromosome"/>
</dbReference>
<dbReference type="GO" id="GO:1990904">
    <property type="term" value="C:ribonucleoprotein complex"/>
    <property type="evidence" value="ECO:0007669"/>
    <property type="project" value="UniProtKB-KW"/>
</dbReference>
<dbReference type="GO" id="GO:0005840">
    <property type="term" value="C:ribosome"/>
    <property type="evidence" value="ECO:0007669"/>
    <property type="project" value="UniProtKB-KW"/>
</dbReference>
<dbReference type="GO" id="GO:0003735">
    <property type="term" value="F:structural constituent of ribosome"/>
    <property type="evidence" value="ECO:0007669"/>
    <property type="project" value="InterPro"/>
</dbReference>
<dbReference type="GO" id="GO:0006412">
    <property type="term" value="P:translation"/>
    <property type="evidence" value="ECO:0007669"/>
    <property type="project" value="UniProtKB-UniRule"/>
</dbReference>
<dbReference type="Gene3D" id="6.10.140.1970">
    <property type="match status" value="1"/>
</dbReference>
<dbReference type="HAMAP" id="MF_00374">
    <property type="entry name" value="Ribosomal_uL29"/>
    <property type="match status" value="1"/>
</dbReference>
<dbReference type="InterPro" id="IPR001854">
    <property type="entry name" value="Ribosomal_uL29"/>
</dbReference>
<dbReference type="InterPro" id="IPR036049">
    <property type="entry name" value="Ribosomal_uL29_sf"/>
</dbReference>
<dbReference type="NCBIfam" id="TIGR00012">
    <property type="entry name" value="L29"/>
    <property type="match status" value="1"/>
</dbReference>
<dbReference type="Pfam" id="PF00831">
    <property type="entry name" value="Ribosomal_L29"/>
    <property type="match status" value="1"/>
</dbReference>
<dbReference type="SUPFAM" id="SSF46561">
    <property type="entry name" value="Ribosomal protein L29 (L29p)"/>
    <property type="match status" value="1"/>
</dbReference>
<comment type="similarity">
    <text evidence="1">Belongs to the universal ribosomal protein uL29 family.</text>
</comment>